<organism>
    <name type="scientific">Saccharolobus solfataricus</name>
    <name type="common">Sulfolobus solfataricus</name>
    <dbReference type="NCBI Taxonomy" id="2287"/>
    <lineage>
        <taxon>Archaea</taxon>
        <taxon>Thermoproteota</taxon>
        <taxon>Thermoprotei</taxon>
        <taxon>Sulfolobales</taxon>
        <taxon>Sulfolobaceae</taxon>
        <taxon>Saccharolobus</taxon>
    </lineage>
</organism>
<proteinExistence type="evidence at protein level"/>
<feature type="chain" id="PRO_0000414839" description="Glucose 1-dehydrogenase">
    <location>
        <begin position="1"/>
        <end position="366"/>
    </location>
</feature>
<feature type="binding site" evidence="3">
    <location>
        <position position="39"/>
    </location>
    <ligand>
        <name>Zn(2+)</name>
        <dbReference type="ChEBI" id="CHEBI:29105"/>
        <label>1</label>
        <note>catalytic</note>
    </ligand>
</feature>
<feature type="binding site" evidence="1">
    <location>
        <position position="41"/>
    </location>
    <ligand>
        <name>substrate</name>
    </ligand>
</feature>
<feature type="binding site" evidence="3">
    <location>
        <position position="66"/>
    </location>
    <ligand>
        <name>Zn(2+)</name>
        <dbReference type="ChEBI" id="CHEBI:29105"/>
        <label>1</label>
        <note>catalytic</note>
    </ligand>
</feature>
<feature type="binding site" evidence="3">
    <location>
        <position position="67"/>
    </location>
    <ligand>
        <name>Zn(2+)</name>
        <dbReference type="ChEBI" id="CHEBI:29105"/>
        <label>1</label>
        <note>catalytic</note>
    </ligand>
</feature>
<feature type="binding site" evidence="3">
    <location>
        <position position="89"/>
    </location>
    <ligand>
        <name>substrate</name>
    </ligand>
</feature>
<feature type="binding site" evidence="3">
    <location>
        <position position="93"/>
    </location>
    <ligand>
        <name>Zn(2+)</name>
        <dbReference type="ChEBI" id="CHEBI:29105"/>
        <label>2</label>
        <note>structural</note>
    </ligand>
</feature>
<feature type="binding site" evidence="3">
    <location>
        <position position="96"/>
    </location>
    <ligand>
        <name>Zn(2+)</name>
        <dbReference type="ChEBI" id="CHEBI:29105"/>
        <label>2</label>
        <note>structural</note>
    </ligand>
</feature>
<feature type="binding site" evidence="3">
    <location>
        <position position="99"/>
    </location>
    <ligand>
        <name>Zn(2+)</name>
        <dbReference type="ChEBI" id="CHEBI:29105"/>
        <label>2</label>
        <note>structural</note>
    </ligand>
</feature>
<feature type="binding site" evidence="3">
    <location>
        <position position="107"/>
    </location>
    <ligand>
        <name>Zn(2+)</name>
        <dbReference type="ChEBI" id="CHEBI:29105"/>
        <label>2</label>
        <note>structural</note>
    </ligand>
</feature>
<feature type="binding site" evidence="3">
    <location>
        <position position="114"/>
    </location>
    <ligand>
        <name>substrate</name>
    </ligand>
</feature>
<feature type="binding site" evidence="3">
    <location>
        <position position="150"/>
    </location>
    <ligand>
        <name>substrate</name>
    </ligand>
</feature>
<feature type="binding site" evidence="3">
    <location>
        <position position="150"/>
    </location>
    <ligand>
        <name>Zn(2+)</name>
        <dbReference type="ChEBI" id="CHEBI:29105"/>
        <label>1</label>
        <note>catalytic</note>
    </ligand>
</feature>
<feature type="binding site" evidence="3">
    <location>
        <position position="154"/>
    </location>
    <ligand>
        <name>substrate</name>
    </ligand>
</feature>
<feature type="binding site" evidence="3">
    <location>
        <begin position="189"/>
        <end position="192"/>
    </location>
    <ligand>
        <name>NADP(+)</name>
        <dbReference type="ChEBI" id="CHEBI:58349"/>
    </ligand>
</feature>
<feature type="binding site" evidence="3">
    <location>
        <begin position="211"/>
        <end position="213"/>
    </location>
    <ligand>
        <name>NADP(+)</name>
        <dbReference type="ChEBI" id="CHEBI:58349"/>
    </ligand>
</feature>
<feature type="binding site" evidence="3">
    <location>
        <begin position="277"/>
        <end position="279"/>
    </location>
    <ligand>
        <name>NADP(+)</name>
        <dbReference type="ChEBI" id="CHEBI:58349"/>
    </ligand>
</feature>
<feature type="binding site" evidence="3">
    <location>
        <begin position="305"/>
        <end position="307"/>
    </location>
    <ligand>
        <name>NADP(+)</name>
        <dbReference type="ChEBI" id="CHEBI:58349"/>
    </ligand>
</feature>
<feature type="binding site" evidence="3">
    <location>
        <position position="307"/>
    </location>
    <ligand>
        <name>substrate</name>
    </ligand>
</feature>
<feature type="binding site" evidence="3">
    <location>
        <position position="354"/>
    </location>
    <ligand>
        <name>NADP(+)</name>
        <dbReference type="ChEBI" id="CHEBI:58349"/>
    </ligand>
</feature>
<feature type="mutagenesis site" description="Large decrease in catalytic activity and substrate affinity." evidence="3">
    <original>T</original>
    <variation>A</variation>
    <location>
        <position position="41"/>
    </location>
</feature>
<feature type="strand" evidence="7">
    <location>
        <begin position="2"/>
        <end position="6"/>
    </location>
</feature>
<feature type="strand" evidence="7">
    <location>
        <begin position="14"/>
        <end position="17"/>
    </location>
</feature>
<feature type="helix" evidence="7">
    <location>
        <begin position="20"/>
        <end position="22"/>
    </location>
</feature>
<feature type="strand" evidence="7">
    <location>
        <begin position="27"/>
        <end position="38"/>
    </location>
</feature>
<feature type="helix" evidence="7">
    <location>
        <begin position="40"/>
        <end position="46"/>
    </location>
</feature>
<feature type="strand" evidence="7">
    <location>
        <begin position="66"/>
        <end position="72"/>
    </location>
</feature>
<feature type="strand" evidence="7">
    <location>
        <begin position="84"/>
        <end position="87"/>
    </location>
</feature>
<feature type="strand" evidence="7">
    <location>
        <begin position="89"/>
        <end position="91"/>
    </location>
</feature>
<feature type="strand" evidence="7">
    <location>
        <begin position="94"/>
        <end position="96"/>
    </location>
</feature>
<feature type="helix" evidence="7">
    <location>
        <begin position="97"/>
        <end position="100"/>
    </location>
</feature>
<feature type="helix" evidence="7">
    <location>
        <begin position="104"/>
        <end position="106"/>
    </location>
</feature>
<feature type="strand" evidence="7">
    <location>
        <begin position="108"/>
        <end position="110"/>
    </location>
</feature>
<feature type="turn" evidence="7">
    <location>
        <begin position="115"/>
        <end position="117"/>
    </location>
</feature>
<feature type="strand" evidence="7">
    <location>
        <begin position="118"/>
        <end position="120"/>
    </location>
</feature>
<feature type="strand" evidence="7">
    <location>
        <begin position="125"/>
        <end position="130"/>
    </location>
</feature>
<feature type="helix" evidence="7">
    <location>
        <begin position="132"/>
        <end position="134"/>
    </location>
</feature>
<feature type="strand" evidence="7">
    <location>
        <begin position="135"/>
        <end position="138"/>
    </location>
</feature>
<feature type="helix" evidence="7">
    <location>
        <begin position="140"/>
        <end position="142"/>
    </location>
</feature>
<feature type="turn" evidence="7">
    <location>
        <begin position="143"/>
        <end position="145"/>
    </location>
</feature>
<feature type="helix" evidence="7">
    <location>
        <begin position="146"/>
        <end position="148"/>
    </location>
</feature>
<feature type="helix" evidence="7">
    <location>
        <begin position="149"/>
        <end position="165"/>
    </location>
</feature>
<feature type="helix" evidence="7">
    <location>
        <begin position="166"/>
        <end position="168"/>
    </location>
</feature>
<feature type="strand" evidence="7">
    <location>
        <begin position="177"/>
        <end position="179"/>
    </location>
</feature>
<feature type="strand" evidence="7">
    <location>
        <begin position="183"/>
        <end position="188"/>
    </location>
</feature>
<feature type="helix" evidence="7">
    <location>
        <begin position="190"/>
        <end position="203"/>
    </location>
</feature>
<feature type="strand" evidence="7">
    <location>
        <begin position="206"/>
        <end position="213"/>
    </location>
</feature>
<feature type="helix" evidence="7">
    <location>
        <begin position="217"/>
        <end position="226"/>
    </location>
</feature>
<feature type="strand" evidence="7">
    <location>
        <begin position="229"/>
        <end position="232"/>
    </location>
</feature>
<feature type="helix" evidence="7">
    <location>
        <begin position="238"/>
        <end position="244"/>
    </location>
</feature>
<feature type="strand" evidence="7">
    <location>
        <begin position="247"/>
        <end position="252"/>
    </location>
</feature>
<feature type="helix" evidence="7">
    <location>
        <begin position="259"/>
        <end position="264"/>
    </location>
</feature>
<feature type="helix" evidence="7">
    <location>
        <begin position="265"/>
        <end position="267"/>
    </location>
</feature>
<feature type="strand" evidence="7">
    <location>
        <begin position="268"/>
        <end position="276"/>
    </location>
</feature>
<feature type="strand" evidence="7">
    <location>
        <begin position="284"/>
        <end position="288"/>
    </location>
</feature>
<feature type="helix" evidence="7">
    <location>
        <begin position="289"/>
        <end position="297"/>
    </location>
</feature>
<feature type="strand" evidence="7">
    <location>
        <begin position="301"/>
        <end position="304"/>
    </location>
</feature>
<feature type="helix" evidence="7">
    <location>
        <begin position="310"/>
        <end position="326"/>
    </location>
</feature>
<feature type="helix" evidence="7">
    <location>
        <begin position="328"/>
        <end position="331"/>
    </location>
</feature>
<feature type="strand" evidence="7">
    <location>
        <begin position="334"/>
        <end position="340"/>
    </location>
</feature>
<feature type="helix" evidence="7">
    <location>
        <begin position="344"/>
        <end position="352"/>
    </location>
</feature>
<feature type="strand" evidence="7">
    <location>
        <begin position="360"/>
        <end position="364"/>
    </location>
</feature>
<dbReference type="EC" id="1.1.1.47" evidence="1 2 4"/>
<dbReference type="EC" id="1.1.1.359" evidence="2 4"/>
<dbReference type="EC" id="1.1.1.120" evidence="2 4"/>
<dbReference type="EC" id="1.1.1.48" evidence="2"/>
<dbReference type="EMBL" id="AJ012093">
    <property type="protein sequence ID" value="CAA09918.1"/>
    <property type="molecule type" value="Genomic_DNA"/>
</dbReference>
<dbReference type="PIR" id="T44937">
    <property type="entry name" value="T44937"/>
</dbReference>
<dbReference type="RefSeq" id="WP_009992653.1">
    <property type="nucleotide sequence ID" value="NZ_LT549890.1"/>
</dbReference>
<dbReference type="PDB" id="2CD9">
    <property type="method" value="X-ray"/>
    <property type="resolution" value="1.80 A"/>
    <property type="chains" value="A/B=1-366"/>
</dbReference>
<dbReference type="PDB" id="2CDA">
    <property type="method" value="X-ray"/>
    <property type="resolution" value="2.28 A"/>
    <property type="chains" value="A/B=1-366"/>
</dbReference>
<dbReference type="PDB" id="2CDB">
    <property type="method" value="X-ray"/>
    <property type="resolution" value="1.60 A"/>
    <property type="chains" value="A/B/C/D=1-366"/>
</dbReference>
<dbReference type="PDB" id="2CDC">
    <property type="method" value="X-ray"/>
    <property type="resolution" value="1.50 A"/>
    <property type="chains" value="A/B/C/D=1-366"/>
</dbReference>
<dbReference type="PDBsum" id="2CD9"/>
<dbReference type="PDBsum" id="2CDA"/>
<dbReference type="PDBsum" id="2CDB"/>
<dbReference type="PDBsum" id="2CDC"/>
<dbReference type="SMR" id="O93715"/>
<dbReference type="OMA" id="NWGHEDI"/>
<dbReference type="OrthoDB" id="41394at2157"/>
<dbReference type="BioCyc" id="MetaCyc:MONOMER-4842"/>
<dbReference type="BRENDA" id="1.1.1.359">
    <property type="organism ID" value="6163"/>
</dbReference>
<dbReference type="BRENDA" id="1.1.1.47">
    <property type="organism ID" value="6163"/>
</dbReference>
<dbReference type="SABIO-RK" id="O93715"/>
<dbReference type="EvolutionaryTrace" id="O93715"/>
<dbReference type="GO" id="GO:0047640">
    <property type="term" value="F:aldose 1-dehydrogenase activity"/>
    <property type="evidence" value="ECO:0007669"/>
    <property type="project" value="RHEA"/>
</dbReference>
<dbReference type="GO" id="GO:0005536">
    <property type="term" value="F:D-glucose binding"/>
    <property type="evidence" value="ECO:0000314"/>
    <property type="project" value="UniProtKB"/>
</dbReference>
<dbReference type="GO" id="GO:0047910">
    <property type="term" value="F:galactose 1-dehydrogenase (NADP+) activity"/>
    <property type="evidence" value="ECO:0000314"/>
    <property type="project" value="UniProtKB"/>
</dbReference>
<dbReference type="GO" id="GO:0019151">
    <property type="term" value="F:galactose 1-dehydrogenase activity"/>
    <property type="evidence" value="ECO:0007669"/>
    <property type="project" value="UniProtKB-EC"/>
</dbReference>
<dbReference type="GO" id="GO:0005534">
    <property type="term" value="F:galactose binding"/>
    <property type="evidence" value="ECO:0000314"/>
    <property type="project" value="UniProtKB"/>
</dbReference>
<dbReference type="GO" id="GO:0047934">
    <property type="term" value="F:glucose 1-dehydrogenase (NAD+) activity"/>
    <property type="evidence" value="ECO:0007669"/>
    <property type="project" value="RHEA"/>
</dbReference>
<dbReference type="GO" id="GO:0047935">
    <property type="term" value="F:glucose 1-dehydrogenase (NADP+) activity"/>
    <property type="evidence" value="ECO:0007669"/>
    <property type="project" value="RHEA"/>
</dbReference>
<dbReference type="GO" id="GO:0047936">
    <property type="term" value="F:glucose 1-dehydrogenase [NAD(P)+] activity"/>
    <property type="evidence" value="ECO:0000314"/>
    <property type="project" value="UniProtKB"/>
</dbReference>
<dbReference type="GO" id="GO:0070403">
    <property type="term" value="F:NAD+ binding"/>
    <property type="evidence" value="ECO:0000314"/>
    <property type="project" value="UniProtKB"/>
</dbReference>
<dbReference type="GO" id="GO:0070401">
    <property type="term" value="F:NADP+ binding"/>
    <property type="evidence" value="ECO:0000314"/>
    <property type="project" value="UniProtKB"/>
</dbReference>
<dbReference type="GO" id="GO:0033222">
    <property type="term" value="F:xylose binding"/>
    <property type="evidence" value="ECO:0000314"/>
    <property type="project" value="UniProtKB"/>
</dbReference>
<dbReference type="GO" id="GO:0008270">
    <property type="term" value="F:zinc ion binding"/>
    <property type="evidence" value="ECO:0000314"/>
    <property type="project" value="UniProtKB"/>
</dbReference>
<dbReference type="GO" id="GO:0033498">
    <property type="term" value="P:galactose catabolic process via D-galactonate"/>
    <property type="evidence" value="ECO:0000314"/>
    <property type="project" value="UniProtKB"/>
</dbReference>
<dbReference type="GO" id="GO:0019595">
    <property type="term" value="P:non-phosphorylated glucose catabolic process"/>
    <property type="evidence" value="ECO:0000314"/>
    <property type="project" value="UniProtKB"/>
</dbReference>
<dbReference type="GO" id="GO:0051262">
    <property type="term" value="P:protein tetramerization"/>
    <property type="evidence" value="ECO:0000314"/>
    <property type="project" value="UniProtKB"/>
</dbReference>
<dbReference type="CDD" id="cd08230">
    <property type="entry name" value="glucose_DH"/>
    <property type="match status" value="1"/>
</dbReference>
<dbReference type="FunFam" id="3.40.50.720:FF:000957">
    <property type="entry name" value="Glucose 1-dehydrogenase"/>
    <property type="match status" value="1"/>
</dbReference>
<dbReference type="FunFam" id="3.90.180.10:FF:000074">
    <property type="entry name" value="Glucose 1-dehydrogenase"/>
    <property type="match status" value="1"/>
</dbReference>
<dbReference type="Gene3D" id="3.90.180.10">
    <property type="entry name" value="Medium-chain alcohol dehydrogenases, catalytic domain"/>
    <property type="match status" value="1"/>
</dbReference>
<dbReference type="Gene3D" id="3.40.50.720">
    <property type="entry name" value="NAD(P)-binding Rossmann-like Domain"/>
    <property type="match status" value="1"/>
</dbReference>
<dbReference type="HAMAP" id="MF_02127">
    <property type="entry name" value="Glucose_DH"/>
    <property type="match status" value="1"/>
</dbReference>
<dbReference type="InterPro" id="IPR013154">
    <property type="entry name" value="ADH-like_N"/>
</dbReference>
<dbReference type="InterPro" id="IPR026583">
    <property type="entry name" value="Glc_1-DH_arc"/>
</dbReference>
<dbReference type="InterPro" id="IPR031640">
    <property type="entry name" value="Glu_dehyd_C"/>
</dbReference>
<dbReference type="InterPro" id="IPR011032">
    <property type="entry name" value="GroES-like_sf"/>
</dbReference>
<dbReference type="InterPro" id="IPR036291">
    <property type="entry name" value="NAD(P)-bd_dom_sf"/>
</dbReference>
<dbReference type="InterPro" id="IPR050129">
    <property type="entry name" value="Zn_alcohol_dh"/>
</dbReference>
<dbReference type="PANTHER" id="PTHR43401">
    <property type="entry name" value="L-THREONINE 3-DEHYDROGENASE"/>
    <property type="match status" value="1"/>
</dbReference>
<dbReference type="PANTHER" id="PTHR43401:SF2">
    <property type="entry name" value="L-THREONINE 3-DEHYDROGENASE"/>
    <property type="match status" value="1"/>
</dbReference>
<dbReference type="Pfam" id="PF08240">
    <property type="entry name" value="ADH_N"/>
    <property type="match status" value="1"/>
</dbReference>
<dbReference type="Pfam" id="PF16912">
    <property type="entry name" value="Glu_dehyd_C"/>
    <property type="match status" value="1"/>
</dbReference>
<dbReference type="SUPFAM" id="SSF50129">
    <property type="entry name" value="GroES-like"/>
    <property type="match status" value="1"/>
</dbReference>
<dbReference type="SUPFAM" id="SSF51735">
    <property type="entry name" value="NAD(P)-binding Rossmann-fold domains"/>
    <property type="match status" value="1"/>
</dbReference>
<accession>O93715</accession>
<sequence>MKAIIVKPPNAGVQVKDVDEKKLDSYGKIKIRTIYNGICGTDREIVNGKLTLSTLPKGKDFLVLGHEAIGVVEESYHGFSQGDLVMPVNRRGCGICRNCLVGRPDFCETGEFGEAGIHKMDGFMREWWYDDPKYLVKIPKSIEDIGILAQPLADIEKSIEEILEVQKRVPVWTCDDGTLNCRKVLVVGTGPIGVLFTLLFRTYGLEVWMANRREPTEVEQTVIEETKTNYYNSSNGYDKLKDSVGKFDVIIDATGADVNILGNVIPLLGRNGVLGLFGFSTSGSVPLDYKTLQEIVHTNKTIIGLVNGQKPHFQQAVVHLASWKTLYPKAAKMLITKTVSINDEKELLKVLREKEHGEIKIRILWE</sequence>
<name>GLCDH_SACSO</name>
<comment type="function">
    <text evidence="2 4">Catalyzes the NAD(P)(+)-dependent oxidation of D-glucose to D-gluconate via gluconolactone. Displays broad substrate specificity since it is able to catalyze the oxidation of a number of alternative aldose sugars, such as D-galactose, D-xylose and L-arabinose, to the corresponding glyconate. Can utilize both NAD(+) and NADP(+) as electron acceptor. Physiologically, seems to be involved in the degradation of both glucose and galactose through a non-phosphorylative variant of the Entner-Doudoroff pathway.</text>
</comment>
<comment type="catalytic activity">
    <reaction evidence="2 4">
        <text>D-glucose + NAD(+) = D-glucono-1,5-lactone + NADH + H(+)</text>
        <dbReference type="Rhea" id="RHEA:14293"/>
        <dbReference type="ChEBI" id="CHEBI:4167"/>
        <dbReference type="ChEBI" id="CHEBI:15378"/>
        <dbReference type="ChEBI" id="CHEBI:16217"/>
        <dbReference type="ChEBI" id="CHEBI:57540"/>
        <dbReference type="ChEBI" id="CHEBI:57945"/>
        <dbReference type="EC" id="1.1.1.47"/>
    </reaction>
</comment>
<comment type="catalytic activity">
    <reaction evidence="2 4">
        <text>D-glucose + NAD(+) = D-glucono-1,5-lactone + NADH + H(+)</text>
        <dbReference type="Rhea" id="RHEA:14293"/>
        <dbReference type="ChEBI" id="CHEBI:4167"/>
        <dbReference type="ChEBI" id="CHEBI:15378"/>
        <dbReference type="ChEBI" id="CHEBI:16217"/>
        <dbReference type="ChEBI" id="CHEBI:57540"/>
        <dbReference type="ChEBI" id="CHEBI:57945"/>
        <dbReference type="EC" id="1.1.1.359"/>
    </reaction>
</comment>
<comment type="catalytic activity">
    <reaction evidence="2 4">
        <text>D-glucose + NADP(+) = D-glucono-1,5-lactone + NADPH + H(+)</text>
        <dbReference type="Rhea" id="RHEA:14405"/>
        <dbReference type="ChEBI" id="CHEBI:4167"/>
        <dbReference type="ChEBI" id="CHEBI:15378"/>
        <dbReference type="ChEBI" id="CHEBI:16217"/>
        <dbReference type="ChEBI" id="CHEBI:57783"/>
        <dbReference type="ChEBI" id="CHEBI:58349"/>
        <dbReference type="EC" id="1.1.1.47"/>
    </reaction>
</comment>
<comment type="catalytic activity">
    <reaction evidence="2 4">
        <text>D-glucose + NADP(+) = D-glucono-1,5-lactone + NADPH + H(+)</text>
        <dbReference type="Rhea" id="RHEA:14405"/>
        <dbReference type="ChEBI" id="CHEBI:4167"/>
        <dbReference type="ChEBI" id="CHEBI:15378"/>
        <dbReference type="ChEBI" id="CHEBI:16217"/>
        <dbReference type="ChEBI" id="CHEBI:57783"/>
        <dbReference type="ChEBI" id="CHEBI:58349"/>
        <dbReference type="EC" id="1.1.1.359"/>
    </reaction>
</comment>
<comment type="catalytic activity">
    <reaction evidence="2">
        <text>D-galactose + NAD(+) = D-galactono-1,4-lactone + NADH + H(+)</text>
        <dbReference type="Rhea" id="RHEA:21296"/>
        <dbReference type="ChEBI" id="CHEBI:4139"/>
        <dbReference type="ChEBI" id="CHEBI:15378"/>
        <dbReference type="ChEBI" id="CHEBI:15895"/>
        <dbReference type="ChEBI" id="CHEBI:57540"/>
        <dbReference type="ChEBI" id="CHEBI:57945"/>
        <dbReference type="EC" id="1.1.1.48"/>
    </reaction>
</comment>
<comment type="catalytic activity">
    <reaction evidence="2 4">
        <text>D-galactose + NADP(+) = D-galactono-1,5-lactone + NADPH + H(+)</text>
        <dbReference type="Rhea" id="RHEA:18625"/>
        <dbReference type="ChEBI" id="CHEBI:4139"/>
        <dbReference type="ChEBI" id="CHEBI:15378"/>
        <dbReference type="ChEBI" id="CHEBI:15945"/>
        <dbReference type="ChEBI" id="CHEBI:57783"/>
        <dbReference type="ChEBI" id="CHEBI:58349"/>
        <dbReference type="EC" id="1.1.1.359"/>
    </reaction>
</comment>
<comment type="catalytic activity">
    <reaction evidence="2 4">
        <text>D-galactose + NADP(+) = D-galactono-1,5-lactone + NADPH + H(+)</text>
        <dbReference type="Rhea" id="RHEA:18625"/>
        <dbReference type="ChEBI" id="CHEBI:4139"/>
        <dbReference type="ChEBI" id="CHEBI:15378"/>
        <dbReference type="ChEBI" id="CHEBI:15945"/>
        <dbReference type="ChEBI" id="CHEBI:57783"/>
        <dbReference type="ChEBI" id="CHEBI:58349"/>
        <dbReference type="EC" id="1.1.1.120"/>
    </reaction>
</comment>
<comment type="catalytic activity">
    <reaction evidence="2 4">
        <text>an aldopyranose + NAD(+) = aldono-1,5-lactone + NADH + H(+)</text>
        <dbReference type="Rhea" id="RHEA:15917"/>
        <dbReference type="ChEBI" id="CHEBI:15378"/>
        <dbReference type="ChEBI" id="CHEBI:57540"/>
        <dbReference type="ChEBI" id="CHEBI:57945"/>
        <dbReference type="ChEBI" id="CHEBI:140379"/>
        <dbReference type="ChEBI" id="CHEBI:140380"/>
        <dbReference type="EC" id="1.1.1.359"/>
    </reaction>
</comment>
<comment type="catalytic activity">
    <reaction evidence="2 4">
        <text>an aldopyranose + NADP(+) = aldono-1,5-lactone + NADPH + H(+)</text>
        <dbReference type="Rhea" id="RHEA:36587"/>
        <dbReference type="ChEBI" id="CHEBI:15378"/>
        <dbReference type="ChEBI" id="CHEBI:57783"/>
        <dbReference type="ChEBI" id="CHEBI:58349"/>
        <dbReference type="ChEBI" id="CHEBI:140379"/>
        <dbReference type="ChEBI" id="CHEBI:140380"/>
        <dbReference type="EC" id="1.1.1.359"/>
    </reaction>
</comment>
<comment type="cofactor">
    <cofactor evidence="3">
        <name>Zn(2+)</name>
        <dbReference type="ChEBI" id="CHEBI:29105"/>
    </cofactor>
    <text evidence="3">Binds 2 Zn(2+) ions per subunit. One of the zinc atoms is essential for catalytic activity while the other has a structural function.</text>
</comment>
<comment type="activity regulation">
    <text evidence="4">Inhibited by EDTA in vitro.</text>
</comment>
<comment type="biophysicochemical properties">
    <kinetics>
        <KM evidence="4">8 mM for D-glucose (in the presence of NAD(+), at 70 degrees Celsius and pH 8)</KM>
        <KM evidence="2">1.5 mM for D-glucose (in the presence of NAD(+), at 70 degrees Celsius and pH 7.5)</KM>
        <KM evidence="4">0.44 mM for D-glucose (in the presence of NADP(+), at 70 degrees Celsius and pH 8)</KM>
        <KM evidence="2">1.3 mM for D-glucose (in the presence of NADP(+), at 70 degrees Celsius and pH 7.5)</KM>
        <KM evidence="2">0.57 mM for D-galactose (in the presence of NAD(+), at 70 degrees Celsius and pH 7.5)</KM>
        <KM evidence="4">22 mM for D-galactose (in the presence of NADP(+), at 70 degrees Celsius and pH 8)</KM>
        <KM evidence="2">0.44 mM for D-galactose (in the presence of NADP(+), at 70 degrees Celsius and pH 7.5)</KM>
        <KM evidence="3">0.25 mM for D-xylose (in the presence of NAD(+), at 70 degrees Celsius and pH 7.5)</KM>
        <KM evidence="3">0.18 mM for D-xylose (in the presence of NADP(+), at 70 degrees Celsius and pH 7.5)</KM>
        <KM evidence="4">1.2 mM for NAD(+) (at 70 degrees Celsius and pH 8)</KM>
        <KM evidence="4">0.03 mM for NADP(+) (at 70 degrees Celsius and pH 8)</KM>
        <Vmax evidence="2">110.0 umol/min/mg enzyme for the oxidation of D-glucose by NAD(+) (at 70 degrees Celsius and pH 7.5)</Vmax>
        <Vmax evidence="2">70.0 umol/min/mg enzyme for the oxidation of D-glucose by NADP(+) (at 70 degrees Celsius and pH 7.5)</Vmax>
        <Vmax evidence="2">90.0 umol/min/mg enzyme for the oxidation of D-galactose by NAD(+) (at 70 degrees Celsius and pH 7.5)</Vmax>
        <Vmax evidence="2">55.0 umol/min/mg enzyme for the oxidation of D-galactose by NADP(+) (at 70 degrees Celsius and pH 7.5)</Vmax>
        <Vmax evidence="3">90.0 umol/min/mg enzyme for the oxidation of D-xylose by NAD(+) (at 70 degrees Celsius and pH 7.5)</Vmax>
        <Vmax evidence="3">65.0 umol/min/mg enzyme for the oxidation of D-xylose by NADP(+) (at 70 degrees Celsius and pH 7.5)</Vmax>
    </kinetics>
    <phDependence>
        <text evidence="4">Optimum pH is 9.</text>
    </phDependence>
    <temperatureDependence>
        <text evidence="4">Optimum temperature is 77 degrees Celsius. At 37 degrees Celsius, shows about 20% activity as compared with the maximal value.</text>
    </temperatureDependence>
</comment>
<comment type="subunit">
    <text evidence="2 3 4">Homotetramer.</text>
</comment>
<comment type="similarity">
    <text evidence="1">Belongs to the zinc-containing alcohol dehydrogenase family. Glucose 1-dehydrogenase subfamily.</text>
</comment>
<gene>
    <name evidence="6" type="primary">gdh</name>
</gene>
<evidence type="ECO:0000255" key="1">
    <source>
        <dbReference type="HAMAP-Rule" id="MF_02127"/>
    </source>
</evidence>
<evidence type="ECO:0000269" key="2">
    <source>
    </source>
</evidence>
<evidence type="ECO:0000269" key="3">
    <source>
    </source>
</evidence>
<evidence type="ECO:0000269" key="4">
    <source>
    </source>
</evidence>
<evidence type="ECO:0000305" key="5">
    <source>
    </source>
</evidence>
<evidence type="ECO:0000312" key="6">
    <source>
        <dbReference type="EMBL" id="CAA09918.1"/>
    </source>
</evidence>
<evidence type="ECO:0007829" key="7">
    <source>
        <dbReference type="PDB" id="2CDC"/>
    </source>
</evidence>
<keyword id="KW-0002">3D-structure</keyword>
<keyword id="KW-0119">Carbohydrate metabolism</keyword>
<keyword id="KW-0903">Direct protein sequencing</keyword>
<keyword id="KW-0479">Metal-binding</keyword>
<keyword id="KW-0520">NAD</keyword>
<keyword id="KW-0521">NADP</keyword>
<keyword id="KW-0547">Nucleotide-binding</keyword>
<keyword id="KW-0560">Oxidoreductase</keyword>
<keyword id="KW-0862">Zinc</keyword>
<reference key="1">
    <citation type="journal article" date="2003" name="J. Biol. Chem.">
        <title>Metabolic pathway promiscuity in the archaeon Sulfolobus solfataricus revealed by studies on glucose dehydrogenase and 2-keto-3-deoxygluconate aldolase.</title>
        <authorList>
            <person name="Lamble H.J."/>
            <person name="Heyer N.I."/>
            <person name="Bull S.D."/>
            <person name="Hough D.W."/>
            <person name="Danson M.J."/>
        </authorList>
    </citation>
    <scope>NUCLEOTIDE SEQUENCE [GENOMIC DNA]</scope>
    <scope>PROTEIN SEQUENCE OF 1-21</scope>
    <scope>FUNCTION</scope>
    <scope>CATALYTIC ACTIVITY</scope>
    <scope>SUBSTRATE SPECIFICITY</scope>
    <scope>KINETIC PARAMETERS</scope>
    <scope>SUBUNIT</scope>
    <source>
        <strain>ATCC 35091 / DSM 1616 / JCM 8930 / NBRC 15331 / P1</strain>
    </source>
</reference>
<reference key="2">
    <citation type="journal article" date="1986" name="Biochem. J.">
        <title>Glucose dehydrogenase from the thermoacidophilic archaebacterium Sulfolobus solfataricus.</title>
        <authorList>
            <person name="Giardina P."/>
            <person name="de Biasi M.G."/>
            <person name="de Rosa M."/>
            <person name="Gambacorta A."/>
            <person name="Buonocore V."/>
        </authorList>
    </citation>
    <scope>FUNCTION</scope>
    <scope>CATALYTIC ACTIVITY</scope>
    <scope>SUBSTRATE SPECIFICITY</scope>
    <scope>BIOPHYSICOCHEMICAL PROPERTIES</scope>
    <scope>ACTIVITY REGULATION</scope>
    <scope>SUBUNIT</scope>
    <source>
        <strain>DSM 5833 / MT-4</strain>
    </source>
</reference>
<reference key="3">
    <citation type="journal article" date="2006" name="J. Biol. Chem.">
        <title>The structural basis of substrate promiscuity in glucose dehydrogenase from the hyperthermophilic archaeon Sulfolobus solfataricus.</title>
        <authorList>
            <person name="Milburn C.C."/>
            <person name="Lamble H.J."/>
            <person name="Theodossis A."/>
            <person name="Bull S.D."/>
            <person name="Hough D.W."/>
            <person name="Danson M.J."/>
            <person name="Taylor G.L."/>
        </authorList>
    </citation>
    <scope>X-RAY CRYSTALLOGRAPHY (1.50 ANGSTROMS) OF WILD-TYPE IN COMPLEXES WITH NADP AND ZINC AND MUTANT ALA-41 IN COMPLEXES WITH BETA-D-GLUCOSE OR D-XYLOSE; NADP AND ZINC</scope>
    <scope>SUBUNIT</scope>
    <scope>KINETIC PARAMETERS</scope>
    <scope>COFACTOR</scope>
    <scope>CATALYTIC MECHANISM</scope>
    <scope>MUTAGENESIS OF THR-41</scope>
    <source>
        <strain>ATCC 35091 / DSM 1616 / JCM 8930 / NBRC 15331 / P1</strain>
    </source>
</reference>
<protein>
    <recommendedName>
        <fullName evidence="1">Glucose 1-dehydrogenase</fullName>
        <shortName evidence="1">GDH</shortName>
        <shortName evidence="1">GlcDH</shortName>
        <ecNumber evidence="1 2 4">1.1.1.47</ecNumber>
    </recommendedName>
    <alternativeName>
        <fullName evidence="5">Aldose 1-dehydrogenase [NAD(P)(+)]</fullName>
        <ecNumber evidence="2 4">1.1.1.359</ecNumber>
    </alternativeName>
    <alternativeName>
        <fullName evidence="5">Galactose 1-dehydrogenase</fullName>
        <ecNumber evidence="2 4">1.1.1.120</ecNumber>
        <ecNumber evidence="2">1.1.1.48</ecNumber>
    </alternativeName>
</protein>